<organism>
    <name type="scientific">Acidobacterium capsulatum (strain ATCC 51196 / DSM 11244 / BCRC 80197 / JCM 7670 / NBRC 15755 / NCIMB 13165 / 161)</name>
    <dbReference type="NCBI Taxonomy" id="240015"/>
    <lineage>
        <taxon>Bacteria</taxon>
        <taxon>Pseudomonadati</taxon>
        <taxon>Acidobacteriota</taxon>
        <taxon>Terriglobia</taxon>
        <taxon>Terriglobales</taxon>
        <taxon>Acidobacteriaceae</taxon>
        <taxon>Acidobacterium</taxon>
    </lineage>
</organism>
<proteinExistence type="inferred from homology"/>
<evidence type="ECO:0000255" key="1">
    <source>
        <dbReference type="HAMAP-Rule" id="MF_00514"/>
    </source>
</evidence>
<evidence type="ECO:0000256" key="2">
    <source>
        <dbReference type="SAM" id="MobiDB-lite"/>
    </source>
</evidence>
<evidence type="ECO:0000305" key="3"/>
<feature type="chain" id="PRO_1000146111" description="Large ribosomal subunit protein bL35">
    <location>
        <begin position="1"/>
        <end position="65"/>
    </location>
</feature>
<feature type="region of interest" description="Disordered" evidence="2">
    <location>
        <begin position="1"/>
        <end position="28"/>
    </location>
</feature>
<sequence>MPKMKTHRGAAKRFKKTGTGKIKRGQSKMRHILTSKETKTKRKLTASAYVSDADHAKVARMIPYA</sequence>
<protein>
    <recommendedName>
        <fullName evidence="1">Large ribosomal subunit protein bL35</fullName>
    </recommendedName>
    <alternativeName>
        <fullName evidence="3">50S ribosomal protein L35</fullName>
    </alternativeName>
</protein>
<dbReference type="EMBL" id="CP001472">
    <property type="protein sequence ID" value="ACO32243.1"/>
    <property type="molecule type" value="Genomic_DNA"/>
</dbReference>
<dbReference type="RefSeq" id="WP_015897341.1">
    <property type="nucleotide sequence ID" value="NC_012483.1"/>
</dbReference>
<dbReference type="SMR" id="C1FA53"/>
<dbReference type="FunCoup" id="C1FA53">
    <property type="interactions" value="346"/>
</dbReference>
<dbReference type="STRING" id="240015.ACP_2247"/>
<dbReference type="KEGG" id="aca:ACP_2247"/>
<dbReference type="eggNOG" id="COG0291">
    <property type="taxonomic scope" value="Bacteria"/>
</dbReference>
<dbReference type="HOGENOM" id="CLU_169643_4_3_0"/>
<dbReference type="InParanoid" id="C1FA53"/>
<dbReference type="OrthoDB" id="47476at2"/>
<dbReference type="Proteomes" id="UP000002207">
    <property type="component" value="Chromosome"/>
</dbReference>
<dbReference type="GO" id="GO:0022625">
    <property type="term" value="C:cytosolic large ribosomal subunit"/>
    <property type="evidence" value="ECO:0007669"/>
    <property type="project" value="TreeGrafter"/>
</dbReference>
<dbReference type="GO" id="GO:0003735">
    <property type="term" value="F:structural constituent of ribosome"/>
    <property type="evidence" value="ECO:0007669"/>
    <property type="project" value="InterPro"/>
</dbReference>
<dbReference type="GO" id="GO:0006412">
    <property type="term" value="P:translation"/>
    <property type="evidence" value="ECO:0007669"/>
    <property type="project" value="UniProtKB-UniRule"/>
</dbReference>
<dbReference type="FunFam" id="4.10.410.60:FF:000001">
    <property type="entry name" value="50S ribosomal protein L35"/>
    <property type="match status" value="1"/>
</dbReference>
<dbReference type="Gene3D" id="4.10.410.60">
    <property type="match status" value="1"/>
</dbReference>
<dbReference type="HAMAP" id="MF_00514">
    <property type="entry name" value="Ribosomal_bL35"/>
    <property type="match status" value="1"/>
</dbReference>
<dbReference type="InterPro" id="IPR001706">
    <property type="entry name" value="Ribosomal_bL35"/>
</dbReference>
<dbReference type="InterPro" id="IPR021137">
    <property type="entry name" value="Ribosomal_bL35-like"/>
</dbReference>
<dbReference type="InterPro" id="IPR018265">
    <property type="entry name" value="Ribosomal_bL35_CS"/>
</dbReference>
<dbReference type="InterPro" id="IPR037229">
    <property type="entry name" value="Ribosomal_bL35_sf"/>
</dbReference>
<dbReference type="NCBIfam" id="TIGR00001">
    <property type="entry name" value="rpmI_bact"/>
    <property type="match status" value="1"/>
</dbReference>
<dbReference type="PANTHER" id="PTHR33343">
    <property type="entry name" value="54S RIBOSOMAL PROTEIN BL35M"/>
    <property type="match status" value="1"/>
</dbReference>
<dbReference type="PANTHER" id="PTHR33343:SF1">
    <property type="entry name" value="LARGE RIBOSOMAL SUBUNIT PROTEIN BL35M"/>
    <property type="match status" value="1"/>
</dbReference>
<dbReference type="Pfam" id="PF01632">
    <property type="entry name" value="Ribosomal_L35p"/>
    <property type="match status" value="1"/>
</dbReference>
<dbReference type="PRINTS" id="PR00064">
    <property type="entry name" value="RIBOSOMALL35"/>
</dbReference>
<dbReference type="SUPFAM" id="SSF143034">
    <property type="entry name" value="L35p-like"/>
    <property type="match status" value="1"/>
</dbReference>
<dbReference type="PROSITE" id="PS00936">
    <property type="entry name" value="RIBOSOMAL_L35"/>
    <property type="match status" value="1"/>
</dbReference>
<name>RL35_ACIC5</name>
<accession>C1FA53</accession>
<gene>
    <name evidence="1" type="primary">rpmI</name>
    <name type="ordered locus">ACP_2247</name>
</gene>
<reference key="1">
    <citation type="journal article" date="2009" name="Appl. Environ. Microbiol.">
        <title>Three genomes from the phylum Acidobacteria provide insight into the lifestyles of these microorganisms in soils.</title>
        <authorList>
            <person name="Ward N.L."/>
            <person name="Challacombe J.F."/>
            <person name="Janssen P.H."/>
            <person name="Henrissat B."/>
            <person name="Coutinho P.M."/>
            <person name="Wu M."/>
            <person name="Xie G."/>
            <person name="Haft D.H."/>
            <person name="Sait M."/>
            <person name="Badger J."/>
            <person name="Barabote R.D."/>
            <person name="Bradley B."/>
            <person name="Brettin T.S."/>
            <person name="Brinkac L.M."/>
            <person name="Bruce D."/>
            <person name="Creasy T."/>
            <person name="Daugherty S.C."/>
            <person name="Davidsen T.M."/>
            <person name="DeBoy R.T."/>
            <person name="Detter J.C."/>
            <person name="Dodson R.J."/>
            <person name="Durkin A.S."/>
            <person name="Ganapathy A."/>
            <person name="Gwinn-Giglio M."/>
            <person name="Han C.S."/>
            <person name="Khouri H."/>
            <person name="Kiss H."/>
            <person name="Kothari S.P."/>
            <person name="Madupu R."/>
            <person name="Nelson K.E."/>
            <person name="Nelson W.C."/>
            <person name="Paulsen I."/>
            <person name="Penn K."/>
            <person name="Ren Q."/>
            <person name="Rosovitz M.J."/>
            <person name="Selengut J.D."/>
            <person name="Shrivastava S."/>
            <person name="Sullivan S.A."/>
            <person name="Tapia R."/>
            <person name="Thompson L.S."/>
            <person name="Watkins K.L."/>
            <person name="Yang Q."/>
            <person name="Yu C."/>
            <person name="Zafar N."/>
            <person name="Zhou L."/>
            <person name="Kuske C.R."/>
        </authorList>
    </citation>
    <scope>NUCLEOTIDE SEQUENCE [LARGE SCALE GENOMIC DNA]</scope>
    <source>
        <strain>ATCC 51196 / DSM 11244 / BCRC 80197 / JCM 7670 / NBRC 15755 / NCIMB 13165 / 161</strain>
    </source>
</reference>
<keyword id="KW-1185">Reference proteome</keyword>
<keyword id="KW-0687">Ribonucleoprotein</keyword>
<keyword id="KW-0689">Ribosomal protein</keyword>
<comment type="similarity">
    <text evidence="1">Belongs to the bacterial ribosomal protein bL35 family.</text>
</comment>